<keyword id="KW-0963">Cytoplasm</keyword>
<keyword id="KW-0378">Hydrolase</keyword>
<keyword id="KW-0694">RNA-binding</keyword>
<keyword id="KW-0820">tRNA-binding</keyword>
<sequence>MKLIVGLGNPGREYELTRHNIGFMAIDELAKRWNISLNEQKFKGLFGAGFVNGEKVILLKPLTYMNLSGESIRPLMDYYKIDVEDFVVLYDDLDIPVGKLRLRMKGSAGGHNGVKSTISHLGTQEFQRIRMGIDRPKNGMKVVDYVLGRFTSEEIPDVNHSIEKAADACEEWLNKPFLQIMNTFNS</sequence>
<accession>Q6HPW6</accession>
<gene>
    <name evidence="1" type="primary">pth</name>
    <name type="synonym">spoVC</name>
    <name type="ordered locus">BT9727_0046</name>
</gene>
<proteinExistence type="inferred from homology"/>
<dbReference type="EC" id="3.1.1.29" evidence="1"/>
<dbReference type="EMBL" id="AE017355">
    <property type="protein sequence ID" value="AAT63962.1"/>
    <property type="molecule type" value="Genomic_DNA"/>
</dbReference>
<dbReference type="RefSeq" id="WP_003170434.1">
    <property type="nucleotide sequence ID" value="NC_005957.1"/>
</dbReference>
<dbReference type="RefSeq" id="YP_034404.1">
    <property type="nucleotide sequence ID" value="NC_005957.1"/>
</dbReference>
<dbReference type="SMR" id="Q6HPW6"/>
<dbReference type="GeneID" id="93011019"/>
<dbReference type="KEGG" id="btk:BT9727_0046"/>
<dbReference type="PATRIC" id="fig|281309.8.peg.48"/>
<dbReference type="HOGENOM" id="CLU_062456_4_1_9"/>
<dbReference type="Proteomes" id="UP000001301">
    <property type="component" value="Chromosome"/>
</dbReference>
<dbReference type="GO" id="GO:0005737">
    <property type="term" value="C:cytoplasm"/>
    <property type="evidence" value="ECO:0007669"/>
    <property type="project" value="UniProtKB-SubCell"/>
</dbReference>
<dbReference type="GO" id="GO:0004045">
    <property type="term" value="F:peptidyl-tRNA hydrolase activity"/>
    <property type="evidence" value="ECO:0007669"/>
    <property type="project" value="UniProtKB-UniRule"/>
</dbReference>
<dbReference type="GO" id="GO:0000049">
    <property type="term" value="F:tRNA binding"/>
    <property type="evidence" value="ECO:0007669"/>
    <property type="project" value="UniProtKB-UniRule"/>
</dbReference>
<dbReference type="GO" id="GO:0006515">
    <property type="term" value="P:protein quality control for misfolded or incompletely synthesized proteins"/>
    <property type="evidence" value="ECO:0007669"/>
    <property type="project" value="UniProtKB-UniRule"/>
</dbReference>
<dbReference type="GO" id="GO:0072344">
    <property type="term" value="P:rescue of stalled ribosome"/>
    <property type="evidence" value="ECO:0007669"/>
    <property type="project" value="UniProtKB-UniRule"/>
</dbReference>
<dbReference type="CDD" id="cd00462">
    <property type="entry name" value="PTH"/>
    <property type="match status" value="1"/>
</dbReference>
<dbReference type="FunFam" id="3.40.50.1470:FF:000001">
    <property type="entry name" value="Peptidyl-tRNA hydrolase"/>
    <property type="match status" value="1"/>
</dbReference>
<dbReference type="Gene3D" id="3.40.50.1470">
    <property type="entry name" value="Peptidyl-tRNA hydrolase"/>
    <property type="match status" value="1"/>
</dbReference>
<dbReference type="HAMAP" id="MF_00083">
    <property type="entry name" value="Pept_tRNA_hydro_bact"/>
    <property type="match status" value="1"/>
</dbReference>
<dbReference type="InterPro" id="IPR001328">
    <property type="entry name" value="Pept_tRNA_hydro"/>
</dbReference>
<dbReference type="InterPro" id="IPR018171">
    <property type="entry name" value="Pept_tRNA_hydro_CS"/>
</dbReference>
<dbReference type="InterPro" id="IPR036416">
    <property type="entry name" value="Pept_tRNA_hydro_sf"/>
</dbReference>
<dbReference type="NCBIfam" id="TIGR00447">
    <property type="entry name" value="pth"/>
    <property type="match status" value="1"/>
</dbReference>
<dbReference type="PANTHER" id="PTHR17224">
    <property type="entry name" value="PEPTIDYL-TRNA HYDROLASE"/>
    <property type="match status" value="1"/>
</dbReference>
<dbReference type="PANTHER" id="PTHR17224:SF1">
    <property type="entry name" value="PEPTIDYL-TRNA HYDROLASE"/>
    <property type="match status" value="1"/>
</dbReference>
<dbReference type="Pfam" id="PF01195">
    <property type="entry name" value="Pept_tRNA_hydro"/>
    <property type="match status" value="1"/>
</dbReference>
<dbReference type="SUPFAM" id="SSF53178">
    <property type="entry name" value="Peptidyl-tRNA hydrolase-like"/>
    <property type="match status" value="1"/>
</dbReference>
<dbReference type="PROSITE" id="PS01195">
    <property type="entry name" value="PEPT_TRNA_HYDROL_1"/>
    <property type="match status" value="1"/>
</dbReference>
<dbReference type="PROSITE" id="PS01196">
    <property type="entry name" value="PEPT_TRNA_HYDROL_2"/>
    <property type="match status" value="1"/>
</dbReference>
<protein>
    <recommendedName>
        <fullName evidence="1">Peptidyl-tRNA hydrolase</fullName>
        <shortName evidence="1">Pth</shortName>
        <ecNumber evidence="1">3.1.1.29</ecNumber>
    </recommendedName>
</protein>
<feature type="chain" id="PRO_0000187689" description="Peptidyl-tRNA hydrolase">
    <location>
        <begin position="1"/>
        <end position="186"/>
    </location>
</feature>
<feature type="active site" description="Proton acceptor" evidence="1">
    <location>
        <position position="19"/>
    </location>
</feature>
<feature type="binding site" evidence="1">
    <location>
        <position position="14"/>
    </location>
    <ligand>
        <name>tRNA</name>
        <dbReference type="ChEBI" id="CHEBI:17843"/>
    </ligand>
</feature>
<feature type="binding site" evidence="1">
    <location>
        <position position="64"/>
    </location>
    <ligand>
        <name>tRNA</name>
        <dbReference type="ChEBI" id="CHEBI:17843"/>
    </ligand>
</feature>
<feature type="binding site" evidence="1">
    <location>
        <position position="66"/>
    </location>
    <ligand>
        <name>tRNA</name>
        <dbReference type="ChEBI" id="CHEBI:17843"/>
    </ligand>
</feature>
<feature type="binding site" evidence="1">
    <location>
        <position position="112"/>
    </location>
    <ligand>
        <name>tRNA</name>
        <dbReference type="ChEBI" id="CHEBI:17843"/>
    </ligand>
</feature>
<feature type="site" description="Discriminates between blocked and unblocked aminoacyl-tRNA" evidence="1">
    <location>
        <position position="9"/>
    </location>
</feature>
<feature type="site" description="Stabilizes the basic form of H active site to accept a proton" evidence="1">
    <location>
        <position position="91"/>
    </location>
</feature>
<name>PTH_BACHK</name>
<comment type="function">
    <text evidence="1">Hydrolyzes ribosome-free peptidyl-tRNAs (with 1 or more amino acids incorporated), which drop off the ribosome during protein synthesis, or as a result of ribosome stalling.</text>
</comment>
<comment type="function">
    <text evidence="1">Catalyzes the release of premature peptidyl moieties from peptidyl-tRNA molecules trapped in stalled 50S ribosomal subunits, and thus maintains levels of free tRNAs and 50S ribosomes.</text>
</comment>
<comment type="catalytic activity">
    <reaction evidence="1">
        <text>an N-acyl-L-alpha-aminoacyl-tRNA + H2O = an N-acyl-L-amino acid + a tRNA + H(+)</text>
        <dbReference type="Rhea" id="RHEA:54448"/>
        <dbReference type="Rhea" id="RHEA-COMP:10123"/>
        <dbReference type="Rhea" id="RHEA-COMP:13883"/>
        <dbReference type="ChEBI" id="CHEBI:15377"/>
        <dbReference type="ChEBI" id="CHEBI:15378"/>
        <dbReference type="ChEBI" id="CHEBI:59874"/>
        <dbReference type="ChEBI" id="CHEBI:78442"/>
        <dbReference type="ChEBI" id="CHEBI:138191"/>
        <dbReference type="EC" id="3.1.1.29"/>
    </reaction>
</comment>
<comment type="subunit">
    <text evidence="1">Monomer.</text>
</comment>
<comment type="subcellular location">
    <subcellularLocation>
        <location evidence="1">Cytoplasm</location>
    </subcellularLocation>
</comment>
<comment type="similarity">
    <text evidence="1">Belongs to the PTH family.</text>
</comment>
<reference key="1">
    <citation type="journal article" date="2006" name="J. Bacteriol.">
        <title>Pathogenomic sequence analysis of Bacillus cereus and Bacillus thuringiensis isolates closely related to Bacillus anthracis.</title>
        <authorList>
            <person name="Han C.S."/>
            <person name="Xie G."/>
            <person name="Challacombe J.F."/>
            <person name="Altherr M.R."/>
            <person name="Bhotika S.S."/>
            <person name="Bruce D."/>
            <person name="Campbell C.S."/>
            <person name="Campbell M.L."/>
            <person name="Chen J."/>
            <person name="Chertkov O."/>
            <person name="Cleland C."/>
            <person name="Dimitrijevic M."/>
            <person name="Doggett N.A."/>
            <person name="Fawcett J.J."/>
            <person name="Glavina T."/>
            <person name="Goodwin L.A."/>
            <person name="Hill K.K."/>
            <person name="Hitchcock P."/>
            <person name="Jackson P.J."/>
            <person name="Keim P."/>
            <person name="Kewalramani A.R."/>
            <person name="Longmire J."/>
            <person name="Lucas S."/>
            <person name="Malfatti S."/>
            <person name="McMurry K."/>
            <person name="Meincke L.J."/>
            <person name="Misra M."/>
            <person name="Moseman B.L."/>
            <person name="Mundt M."/>
            <person name="Munk A.C."/>
            <person name="Okinaka R.T."/>
            <person name="Parson-Quintana B."/>
            <person name="Reilly L.P."/>
            <person name="Richardson P."/>
            <person name="Robinson D.L."/>
            <person name="Rubin E."/>
            <person name="Saunders E."/>
            <person name="Tapia R."/>
            <person name="Tesmer J.G."/>
            <person name="Thayer N."/>
            <person name="Thompson L.S."/>
            <person name="Tice H."/>
            <person name="Ticknor L.O."/>
            <person name="Wills P.L."/>
            <person name="Brettin T.S."/>
            <person name="Gilna P."/>
        </authorList>
    </citation>
    <scope>NUCLEOTIDE SEQUENCE [LARGE SCALE GENOMIC DNA]</scope>
    <source>
        <strain>97-27</strain>
    </source>
</reference>
<evidence type="ECO:0000255" key="1">
    <source>
        <dbReference type="HAMAP-Rule" id="MF_00083"/>
    </source>
</evidence>
<organism>
    <name type="scientific">Bacillus thuringiensis subsp. konkukian (strain 97-27)</name>
    <dbReference type="NCBI Taxonomy" id="281309"/>
    <lineage>
        <taxon>Bacteria</taxon>
        <taxon>Bacillati</taxon>
        <taxon>Bacillota</taxon>
        <taxon>Bacilli</taxon>
        <taxon>Bacillales</taxon>
        <taxon>Bacillaceae</taxon>
        <taxon>Bacillus</taxon>
        <taxon>Bacillus cereus group</taxon>
    </lineage>
</organism>